<protein>
    <recommendedName>
        <fullName evidence="1">Probable ECA polymerase</fullName>
    </recommendedName>
</protein>
<dbReference type="EMBL" id="CU928160">
    <property type="protein sequence ID" value="CAR00766.1"/>
    <property type="molecule type" value="Genomic_DNA"/>
</dbReference>
<dbReference type="RefSeq" id="WP_000055129.1">
    <property type="nucleotide sequence ID" value="NC_011741.1"/>
</dbReference>
<dbReference type="KEGG" id="ecr:ECIAI1_3981"/>
<dbReference type="HOGENOM" id="CLU_049711_0_0_6"/>
<dbReference type="UniPathway" id="UPA00566"/>
<dbReference type="GO" id="GO:0005886">
    <property type="term" value="C:plasma membrane"/>
    <property type="evidence" value="ECO:0007669"/>
    <property type="project" value="UniProtKB-SubCell"/>
</dbReference>
<dbReference type="GO" id="GO:0009246">
    <property type="term" value="P:enterobacterial common antigen biosynthetic process"/>
    <property type="evidence" value="ECO:0007669"/>
    <property type="project" value="UniProtKB-UniRule"/>
</dbReference>
<dbReference type="HAMAP" id="MF_01003">
    <property type="entry name" value="WzyE"/>
    <property type="match status" value="1"/>
</dbReference>
<dbReference type="InterPro" id="IPR010691">
    <property type="entry name" value="WzyE"/>
</dbReference>
<dbReference type="NCBIfam" id="NF002820">
    <property type="entry name" value="PRK02975.1"/>
    <property type="match status" value="1"/>
</dbReference>
<dbReference type="Pfam" id="PF06899">
    <property type="entry name" value="WzyE"/>
    <property type="match status" value="1"/>
</dbReference>
<organism>
    <name type="scientific">Escherichia coli O8 (strain IAI1)</name>
    <dbReference type="NCBI Taxonomy" id="585034"/>
    <lineage>
        <taxon>Bacteria</taxon>
        <taxon>Pseudomonadati</taxon>
        <taxon>Pseudomonadota</taxon>
        <taxon>Gammaproteobacteria</taxon>
        <taxon>Enterobacterales</taxon>
        <taxon>Enterobacteriaceae</taxon>
        <taxon>Escherichia</taxon>
    </lineage>
</organism>
<feature type="chain" id="PRO_1000200210" description="Probable ECA polymerase">
    <location>
        <begin position="1"/>
        <end position="450"/>
    </location>
</feature>
<feature type="transmembrane region" description="Helical" evidence="1">
    <location>
        <begin position="6"/>
        <end position="26"/>
    </location>
</feature>
<feature type="transmembrane region" description="Helical" evidence="1">
    <location>
        <begin position="37"/>
        <end position="57"/>
    </location>
</feature>
<feature type="transmembrane region" description="Helical" evidence="1">
    <location>
        <begin position="63"/>
        <end position="83"/>
    </location>
</feature>
<feature type="transmembrane region" description="Helical" evidence="1">
    <location>
        <begin position="118"/>
        <end position="138"/>
    </location>
</feature>
<feature type="transmembrane region" description="Helical" evidence="1">
    <location>
        <begin position="155"/>
        <end position="175"/>
    </location>
</feature>
<feature type="transmembrane region" description="Helical" evidence="1">
    <location>
        <begin position="181"/>
        <end position="201"/>
    </location>
</feature>
<feature type="transmembrane region" description="Helical" evidence="1">
    <location>
        <begin position="207"/>
        <end position="227"/>
    </location>
</feature>
<feature type="transmembrane region" description="Helical" evidence="1">
    <location>
        <begin position="228"/>
        <end position="248"/>
    </location>
</feature>
<feature type="transmembrane region" description="Helical" evidence="1">
    <location>
        <begin position="341"/>
        <end position="361"/>
    </location>
</feature>
<feature type="transmembrane region" description="Helical" evidence="1">
    <location>
        <begin position="378"/>
        <end position="398"/>
    </location>
</feature>
<feature type="transmembrane region" description="Helical" evidence="1">
    <location>
        <begin position="410"/>
        <end position="430"/>
    </location>
</feature>
<comment type="function">
    <text evidence="1">Probably involved in the polymerization of enterobacterial common antigen (ECA) trisaccharide repeat units.</text>
</comment>
<comment type="pathway">
    <text evidence="1">Bacterial outer membrane biogenesis; enterobacterial common antigen biosynthesis.</text>
</comment>
<comment type="subunit">
    <text evidence="1">Probably part of a complex composed of WzxE, WzyE and WzzE.</text>
</comment>
<comment type="subcellular location">
    <subcellularLocation>
        <location evidence="1">Cell inner membrane</location>
        <topology evidence="1">Multi-pass membrane protein</topology>
    </subcellularLocation>
</comment>
<comment type="similarity">
    <text evidence="1">Belongs to the WzyE family.</text>
</comment>
<gene>
    <name evidence="1" type="primary">wzyE</name>
    <name type="ordered locus">ECIAI1_3981</name>
</gene>
<evidence type="ECO:0000255" key="1">
    <source>
        <dbReference type="HAMAP-Rule" id="MF_01003"/>
    </source>
</evidence>
<reference key="1">
    <citation type="journal article" date="2009" name="PLoS Genet.">
        <title>Organised genome dynamics in the Escherichia coli species results in highly diverse adaptive paths.</title>
        <authorList>
            <person name="Touchon M."/>
            <person name="Hoede C."/>
            <person name="Tenaillon O."/>
            <person name="Barbe V."/>
            <person name="Baeriswyl S."/>
            <person name="Bidet P."/>
            <person name="Bingen E."/>
            <person name="Bonacorsi S."/>
            <person name="Bouchier C."/>
            <person name="Bouvet O."/>
            <person name="Calteau A."/>
            <person name="Chiapello H."/>
            <person name="Clermont O."/>
            <person name="Cruveiller S."/>
            <person name="Danchin A."/>
            <person name="Diard M."/>
            <person name="Dossat C."/>
            <person name="Karoui M.E."/>
            <person name="Frapy E."/>
            <person name="Garry L."/>
            <person name="Ghigo J.M."/>
            <person name="Gilles A.M."/>
            <person name="Johnson J."/>
            <person name="Le Bouguenec C."/>
            <person name="Lescat M."/>
            <person name="Mangenot S."/>
            <person name="Martinez-Jehanne V."/>
            <person name="Matic I."/>
            <person name="Nassif X."/>
            <person name="Oztas S."/>
            <person name="Petit M.A."/>
            <person name="Pichon C."/>
            <person name="Rouy Z."/>
            <person name="Ruf C.S."/>
            <person name="Schneider D."/>
            <person name="Tourret J."/>
            <person name="Vacherie B."/>
            <person name="Vallenet D."/>
            <person name="Medigue C."/>
            <person name="Rocha E.P.C."/>
            <person name="Denamur E."/>
        </authorList>
    </citation>
    <scope>NUCLEOTIDE SEQUENCE [LARGE SCALE GENOMIC DNA]</scope>
    <source>
        <strain>IAI1</strain>
    </source>
</reference>
<accession>B7M5E1</accession>
<proteinExistence type="inferred from homology"/>
<keyword id="KW-0997">Cell inner membrane</keyword>
<keyword id="KW-1003">Cell membrane</keyword>
<keyword id="KW-0472">Membrane</keyword>
<keyword id="KW-0812">Transmembrane</keyword>
<keyword id="KW-1133">Transmembrane helix</keyword>
<sequence length="450" mass="51517">MSLLQFSGLFVVWLLCTLFIATLTWFEFRRVRFNFNVFFSLLFLLTFFFGFPLTSVLVFRFDVGVAPPEILLQALLSAGCFYAVYYVTYKTRLRKRVADVPRRPLFTMNRVETNLTWVILMGIALVSVGIFFMHNGFLLFRLNSYSQIFSSEVSGVALKRFFYFFIPAMLVVYFLRQDSKAWLFFLVSTVAFGLLTYMIVGGTRANIIIAFAIFLFIGIIRGWISLWMLAAAGVLGIVGMFWLALKRYGMNVSGDEAFYTFLYLTRDTFSPWENLALLLQNYDNIDFQGLAPIVRDFYVFIPSWLWPGRPSMVLNSANYFTWEVLNNHSGLAISPTLIGSLVVMGGALFIPLGAIVVGLIIKWFDWLYELGNREPNRYKAAILHSFCFGAIFNMIVLAREGLDSFVSRVVFFIVVFGACLMIAKLLYWLFESAGLIHKRTKSSLRTQVEG</sequence>
<name>WZYE_ECO8A</name>